<protein>
    <recommendedName>
        <fullName evidence="1">Hydroxyethylthiazole kinase</fullName>
        <ecNumber evidence="1">2.7.1.50</ecNumber>
    </recommendedName>
    <alternativeName>
        <fullName evidence="1">4-methyl-5-beta-hydroxyethylthiazole kinase</fullName>
        <shortName evidence="1">TH kinase</shortName>
        <shortName evidence="1">Thz kinase</shortName>
    </alternativeName>
</protein>
<proteinExistence type="evidence at protein level"/>
<keyword id="KW-0002">3D-structure</keyword>
<keyword id="KW-0067">ATP-binding</keyword>
<keyword id="KW-0418">Kinase</keyword>
<keyword id="KW-0460">Magnesium</keyword>
<keyword id="KW-0479">Metal-binding</keyword>
<keyword id="KW-0547">Nucleotide-binding</keyword>
<keyword id="KW-0784">Thiamine biosynthesis</keyword>
<keyword id="KW-0808">Transferase</keyword>
<evidence type="ECO:0000255" key="1">
    <source>
        <dbReference type="HAMAP-Rule" id="MF_00228"/>
    </source>
</evidence>
<evidence type="ECO:0007829" key="2">
    <source>
        <dbReference type="PDB" id="6JYY"/>
    </source>
</evidence>
<sequence>MPELLNPAPVAHLRHLLRAHSPLVHCMTNDVVQTFTANVLLAVGASPAMVIDPREAAQFAAIADALLINVGTLTEDRAVAMRAAVEHARQAGKPWTLDPVAVGALTVRTAFCHELLALQPAAIRGNASEILALAGMSAGGRGVDTTDTAAAALPAAQALARRLATVVAVTGEVDYVTDGERVLSVAGGNPLMTRVVGTGCALSAVVAASAALPGDRLENVAAACGLMKQAGAIAARQGGPGSFIPAFLDALYQEVQG</sequence>
<name>THIM_KLEP7</name>
<dbReference type="EC" id="2.7.1.50" evidence="1"/>
<dbReference type="EMBL" id="CP000647">
    <property type="protein sequence ID" value="ABR77969.1"/>
    <property type="molecule type" value="Genomic_DNA"/>
</dbReference>
<dbReference type="RefSeq" id="WP_015875043.1">
    <property type="nucleotide sequence ID" value="NC_009648.1"/>
</dbReference>
<dbReference type="PDB" id="6JYY">
    <property type="method" value="X-ray"/>
    <property type="resolution" value="2.00 A"/>
    <property type="chains" value="A/B/C=1-257"/>
</dbReference>
<dbReference type="PDBsum" id="6JYY"/>
<dbReference type="SMR" id="A6TBJ8"/>
<dbReference type="STRING" id="272620.KPN_02551"/>
<dbReference type="jPOST" id="A6TBJ8"/>
<dbReference type="PaxDb" id="272620-KPN_02551"/>
<dbReference type="EnsemblBacteria" id="ABR77969">
    <property type="protein sequence ID" value="ABR77969"/>
    <property type="gene ID" value="KPN_02551"/>
</dbReference>
<dbReference type="KEGG" id="kpn:KPN_02551"/>
<dbReference type="HOGENOM" id="CLU_019943_0_1_6"/>
<dbReference type="UniPathway" id="UPA00060">
    <property type="reaction ID" value="UER00139"/>
</dbReference>
<dbReference type="Proteomes" id="UP000000265">
    <property type="component" value="Chromosome"/>
</dbReference>
<dbReference type="GO" id="GO:0005524">
    <property type="term" value="F:ATP binding"/>
    <property type="evidence" value="ECO:0007669"/>
    <property type="project" value="UniProtKB-UniRule"/>
</dbReference>
<dbReference type="GO" id="GO:0004417">
    <property type="term" value="F:hydroxyethylthiazole kinase activity"/>
    <property type="evidence" value="ECO:0007669"/>
    <property type="project" value="UniProtKB-UniRule"/>
</dbReference>
<dbReference type="GO" id="GO:0000287">
    <property type="term" value="F:magnesium ion binding"/>
    <property type="evidence" value="ECO:0007669"/>
    <property type="project" value="UniProtKB-UniRule"/>
</dbReference>
<dbReference type="GO" id="GO:0009228">
    <property type="term" value="P:thiamine biosynthetic process"/>
    <property type="evidence" value="ECO:0007669"/>
    <property type="project" value="UniProtKB-KW"/>
</dbReference>
<dbReference type="GO" id="GO:0009229">
    <property type="term" value="P:thiamine diphosphate biosynthetic process"/>
    <property type="evidence" value="ECO:0007669"/>
    <property type="project" value="UniProtKB-UniRule"/>
</dbReference>
<dbReference type="CDD" id="cd01170">
    <property type="entry name" value="THZ_kinase"/>
    <property type="match status" value="1"/>
</dbReference>
<dbReference type="FunFam" id="3.40.1190.20:FF:000015">
    <property type="entry name" value="Hydroxyethylthiazole kinase"/>
    <property type="match status" value="1"/>
</dbReference>
<dbReference type="Gene3D" id="3.40.1190.20">
    <property type="match status" value="1"/>
</dbReference>
<dbReference type="HAMAP" id="MF_00228">
    <property type="entry name" value="Thz_kinase"/>
    <property type="match status" value="1"/>
</dbReference>
<dbReference type="InterPro" id="IPR000417">
    <property type="entry name" value="Hyethyz_kinase"/>
</dbReference>
<dbReference type="InterPro" id="IPR029056">
    <property type="entry name" value="Ribokinase-like"/>
</dbReference>
<dbReference type="NCBIfam" id="NF006830">
    <property type="entry name" value="PRK09355.1"/>
    <property type="match status" value="1"/>
</dbReference>
<dbReference type="NCBIfam" id="TIGR00694">
    <property type="entry name" value="thiM"/>
    <property type="match status" value="1"/>
</dbReference>
<dbReference type="Pfam" id="PF02110">
    <property type="entry name" value="HK"/>
    <property type="match status" value="1"/>
</dbReference>
<dbReference type="PIRSF" id="PIRSF000513">
    <property type="entry name" value="Thz_kinase"/>
    <property type="match status" value="1"/>
</dbReference>
<dbReference type="PRINTS" id="PR01099">
    <property type="entry name" value="HYETHTZKNASE"/>
</dbReference>
<dbReference type="SUPFAM" id="SSF53613">
    <property type="entry name" value="Ribokinase-like"/>
    <property type="match status" value="1"/>
</dbReference>
<accession>A6TBJ8</accession>
<comment type="function">
    <text evidence="1">Catalyzes the phosphorylation of the hydroxyl group of 4-methyl-5-beta-hydroxyethylthiazole (THZ).</text>
</comment>
<comment type="catalytic activity">
    <reaction evidence="1">
        <text>5-(2-hydroxyethyl)-4-methylthiazole + ATP = 4-methyl-5-(2-phosphooxyethyl)-thiazole + ADP + H(+)</text>
        <dbReference type="Rhea" id="RHEA:24212"/>
        <dbReference type="ChEBI" id="CHEBI:15378"/>
        <dbReference type="ChEBI" id="CHEBI:17957"/>
        <dbReference type="ChEBI" id="CHEBI:30616"/>
        <dbReference type="ChEBI" id="CHEBI:58296"/>
        <dbReference type="ChEBI" id="CHEBI:456216"/>
        <dbReference type="EC" id="2.7.1.50"/>
    </reaction>
</comment>
<comment type="cofactor">
    <cofactor evidence="1">
        <name>Mg(2+)</name>
        <dbReference type="ChEBI" id="CHEBI:18420"/>
    </cofactor>
</comment>
<comment type="pathway">
    <text evidence="1">Cofactor biosynthesis; thiamine diphosphate biosynthesis; 4-methyl-5-(2-phosphoethyl)-thiazole from 5-(2-hydroxyethyl)-4-methylthiazole: step 1/1.</text>
</comment>
<comment type="similarity">
    <text evidence="1">Belongs to the Thz kinase family.</text>
</comment>
<gene>
    <name evidence="1" type="primary">thiM</name>
    <name type="ordered locus">KPN78578_25080</name>
    <name type="ORF">KPN_02551</name>
</gene>
<reference key="1">
    <citation type="submission" date="2006-09" db="EMBL/GenBank/DDBJ databases">
        <authorList>
            <consortium name="The Klebsiella pneumonia Genome Sequencing Project"/>
            <person name="McClelland M."/>
            <person name="Sanderson E.K."/>
            <person name="Spieth J."/>
            <person name="Clifton W.S."/>
            <person name="Latreille P."/>
            <person name="Sabo A."/>
            <person name="Pepin K."/>
            <person name="Bhonagiri V."/>
            <person name="Porwollik S."/>
            <person name="Ali J."/>
            <person name="Wilson R.K."/>
        </authorList>
    </citation>
    <scope>NUCLEOTIDE SEQUENCE [LARGE SCALE GENOMIC DNA]</scope>
    <source>
        <strain>ATCC 700721 / MGH 78578</strain>
    </source>
</reference>
<organism>
    <name type="scientific">Klebsiella pneumoniae subsp. pneumoniae (strain ATCC 700721 / MGH 78578)</name>
    <dbReference type="NCBI Taxonomy" id="272620"/>
    <lineage>
        <taxon>Bacteria</taxon>
        <taxon>Pseudomonadati</taxon>
        <taxon>Pseudomonadota</taxon>
        <taxon>Gammaproteobacteria</taxon>
        <taxon>Enterobacterales</taxon>
        <taxon>Enterobacteriaceae</taxon>
        <taxon>Klebsiella/Raoultella group</taxon>
        <taxon>Klebsiella</taxon>
        <taxon>Klebsiella pneumoniae complex</taxon>
    </lineage>
</organism>
<feature type="chain" id="PRO_0000336562" description="Hydroxyethylthiazole kinase">
    <location>
        <begin position="1"/>
        <end position="257"/>
    </location>
</feature>
<feature type="binding site" evidence="1">
    <location>
        <position position="49"/>
    </location>
    <ligand>
        <name>substrate</name>
    </ligand>
</feature>
<feature type="binding site" evidence="1">
    <location>
        <position position="124"/>
    </location>
    <ligand>
        <name>ATP</name>
        <dbReference type="ChEBI" id="CHEBI:30616"/>
    </ligand>
</feature>
<feature type="binding site" evidence="1">
    <location>
        <position position="170"/>
    </location>
    <ligand>
        <name>ATP</name>
        <dbReference type="ChEBI" id="CHEBI:30616"/>
    </ligand>
</feature>
<feature type="binding site" evidence="1">
    <location>
        <position position="197"/>
    </location>
    <ligand>
        <name>substrate</name>
    </ligand>
</feature>
<feature type="helix" evidence="2">
    <location>
        <begin position="10"/>
        <end position="20"/>
    </location>
</feature>
<feature type="strand" evidence="2">
    <location>
        <begin position="23"/>
        <end position="27"/>
    </location>
</feature>
<feature type="turn" evidence="2">
    <location>
        <begin position="30"/>
        <end position="32"/>
    </location>
</feature>
<feature type="helix" evidence="2">
    <location>
        <begin position="33"/>
        <end position="42"/>
    </location>
</feature>
<feature type="strand" evidence="2">
    <location>
        <begin position="46"/>
        <end position="48"/>
    </location>
</feature>
<feature type="helix" evidence="2">
    <location>
        <begin position="53"/>
        <end position="60"/>
    </location>
</feature>
<feature type="strand" evidence="2">
    <location>
        <begin position="63"/>
        <end position="69"/>
    </location>
</feature>
<feature type="helix" evidence="2">
    <location>
        <begin position="75"/>
        <end position="91"/>
    </location>
</feature>
<feature type="strand" evidence="2">
    <location>
        <begin position="95"/>
        <end position="98"/>
    </location>
</feature>
<feature type="turn" evidence="2">
    <location>
        <begin position="100"/>
        <end position="104"/>
    </location>
</feature>
<feature type="helix" evidence="2">
    <location>
        <begin position="106"/>
        <end position="116"/>
    </location>
</feature>
<feature type="strand" evidence="2">
    <location>
        <begin position="121"/>
        <end position="125"/>
    </location>
</feature>
<feature type="helix" evidence="2">
    <location>
        <begin position="127"/>
        <end position="134"/>
    </location>
</feature>
<feature type="helix" evidence="2">
    <location>
        <begin position="153"/>
        <end position="163"/>
    </location>
</feature>
<feature type="strand" evidence="2">
    <location>
        <begin position="166"/>
        <end position="169"/>
    </location>
</feature>
<feature type="strand" evidence="2">
    <location>
        <begin position="171"/>
        <end position="180"/>
    </location>
</feature>
<feature type="strand" evidence="2">
    <location>
        <begin position="182"/>
        <end position="185"/>
    </location>
</feature>
<feature type="helix" evidence="2">
    <location>
        <begin position="190"/>
        <end position="194"/>
    </location>
</feature>
<feature type="helix" evidence="2">
    <location>
        <begin position="198"/>
        <end position="210"/>
    </location>
</feature>
<feature type="strand" evidence="2">
    <location>
        <begin position="212"/>
        <end position="214"/>
    </location>
</feature>
<feature type="helix" evidence="2">
    <location>
        <begin position="216"/>
        <end position="235"/>
    </location>
</feature>
<feature type="helix" evidence="2">
    <location>
        <begin position="240"/>
        <end position="251"/>
    </location>
</feature>